<evidence type="ECO:0000255" key="1">
    <source>
        <dbReference type="HAMAP-Rule" id="MF_00051"/>
    </source>
</evidence>
<dbReference type="EC" id="2.1.2.1" evidence="1"/>
<dbReference type="EMBL" id="AE017340">
    <property type="protein sequence ID" value="AAV82704.1"/>
    <property type="molecule type" value="Genomic_DNA"/>
</dbReference>
<dbReference type="RefSeq" id="WP_011235104.1">
    <property type="nucleotide sequence ID" value="NC_006512.1"/>
</dbReference>
<dbReference type="SMR" id="Q5QXT4"/>
<dbReference type="STRING" id="283942.IL1872"/>
<dbReference type="GeneID" id="41337056"/>
<dbReference type="KEGG" id="ilo:IL1872"/>
<dbReference type="eggNOG" id="COG0112">
    <property type="taxonomic scope" value="Bacteria"/>
</dbReference>
<dbReference type="HOGENOM" id="CLU_022477_2_1_6"/>
<dbReference type="OrthoDB" id="9803846at2"/>
<dbReference type="UniPathway" id="UPA00193"/>
<dbReference type="UniPathway" id="UPA00288">
    <property type="reaction ID" value="UER01023"/>
</dbReference>
<dbReference type="Proteomes" id="UP000001171">
    <property type="component" value="Chromosome"/>
</dbReference>
<dbReference type="GO" id="GO:0005829">
    <property type="term" value="C:cytosol"/>
    <property type="evidence" value="ECO:0007669"/>
    <property type="project" value="TreeGrafter"/>
</dbReference>
<dbReference type="GO" id="GO:0004372">
    <property type="term" value="F:glycine hydroxymethyltransferase activity"/>
    <property type="evidence" value="ECO:0007669"/>
    <property type="project" value="UniProtKB-UniRule"/>
</dbReference>
<dbReference type="GO" id="GO:0030170">
    <property type="term" value="F:pyridoxal phosphate binding"/>
    <property type="evidence" value="ECO:0007669"/>
    <property type="project" value="UniProtKB-UniRule"/>
</dbReference>
<dbReference type="GO" id="GO:0019264">
    <property type="term" value="P:glycine biosynthetic process from serine"/>
    <property type="evidence" value="ECO:0007669"/>
    <property type="project" value="UniProtKB-UniRule"/>
</dbReference>
<dbReference type="GO" id="GO:0035999">
    <property type="term" value="P:tetrahydrofolate interconversion"/>
    <property type="evidence" value="ECO:0007669"/>
    <property type="project" value="UniProtKB-UniRule"/>
</dbReference>
<dbReference type="CDD" id="cd00378">
    <property type="entry name" value="SHMT"/>
    <property type="match status" value="1"/>
</dbReference>
<dbReference type="FunFam" id="3.40.640.10:FF:000001">
    <property type="entry name" value="Serine hydroxymethyltransferase"/>
    <property type="match status" value="1"/>
</dbReference>
<dbReference type="FunFam" id="3.90.1150.10:FF:000003">
    <property type="entry name" value="Serine hydroxymethyltransferase"/>
    <property type="match status" value="1"/>
</dbReference>
<dbReference type="Gene3D" id="3.90.1150.10">
    <property type="entry name" value="Aspartate Aminotransferase, domain 1"/>
    <property type="match status" value="1"/>
</dbReference>
<dbReference type="Gene3D" id="3.40.640.10">
    <property type="entry name" value="Type I PLP-dependent aspartate aminotransferase-like (Major domain)"/>
    <property type="match status" value="1"/>
</dbReference>
<dbReference type="HAMAP" id="MF_00051">
    <property type="entry name" value="SHMT"/>
    <property type="match status" value="1"/>
</dbReference>
<dbReference type="InterPro" id="IPR015424">
    <property type="entry name" value="PyrdxlP-dep_Trfase"/>
</dbReference>
<dbReference type="InterPro" id="IPR015421">
    <property type="entry name" value="PyrdxlP-dep_Trfase_major"/>
</dbReference>
<dbReference type="InterPro" id="IPR015422">
    <property type="entry name" value="PyrdxlP-dep_Trfase_small"/>
</dbReference>
<dbReference type="InterPro" id="IPR001085">
    <property type="entry name" value="Ser_HO-MeTrfase"/>
</dbReference>
<dbReference type="InterPro" id="IPR049943">
    <property type="entry name" value="Ser_HO-MeTrfase-like"/>
</dbReference>
<dbReference type="InterPro" id="IPR019798">
    <property type="entry name" value="Ser_HO-MeTrfase_PLP_BS"/>
</dbReference>
<dbReference type="InterPro" id="IPR039429">
    <property type="entry name" value="SHMT-like_dom"/>
</dbReference>
<dbReference type="NCBIfam" id="NF000586">
    <property type="entry name" value="PRK00011.1"/>
    <property type="match status" value="1"/>
</dbReference>
<dbReference type="PANTHER" id="PTHR11680">
    <property type="entry name" value="SERINE HYDROXYMETHYLTRANSFERASE"/>
    <property type="match status" value="1"/>
</dbReference>
<dbReference type="PANTHER" id="PTHR11680:SF50">
    <property type="entry name" value="SERINE HYDROXYMETHYLTRANSFERASE"/>
    <property type="match status" value="1"/>
</dbReference>
<dbReference type="Pfam" id="PF00464">
    <property type="entry name" value="SHMT"/>
    <property type="match status" value="1"/>
</dbReference>
<dbReference type="PIRSF" id="PIRSF000412">
    <property type="entry name" value="SHMT"/>
    <property type="match status" value="1"/>
</dbReference>
<dbReference type="SUPFAM" id="SSF53383">
    <property type="entry name" value="PLP-dependent transferases"/>
    <property type="match status" value="1"/>
</dbReference>
<dbReference type="PROSITE" id="PS00096">
    <property type="entry name" value="SHMT"/>
    <property type="match status" value="1"/>
</dbReference>
<comment type="function">
    <text evidence="1">Catalyzes the reversible interconversion of serine and glycine with tetrahydrofolate (THF) serving as the one-carbon carrier. This reaction serves as the major source of one-carbon groups required for the biosynthesis of purines, thymidylate, methionine, and other important biomolecules. Also exhibits THF-independent aldolase activity toward beta-hydroxyamino acids, producing glycine and aldehydes, via a retro-aldol mechanism.</text>
</comment>
<comment type="catalytic activity">
    <reaction evidence="1">
        <text>(6R)-5,10-methylene-5,6,7,8-tetrahydrofolate + glycine + H2O = (6S)-5,6,7,8-tetrahydrofolate + L-serine</text>
        <dbReference type="Rhea" id="RHEA:15481"/>
        <dbReference type="ChEBI" id="CHEBI:15377"/>
        <dbReference type="ChEBI" id="CHEBI:15636"/>
        <dbReference type="ChEBI" id="CHEBI:33384"/>
        <dbReference type="ChEBI" id="CHEBI:57305"/>
        <dbReference type="ChEBI" id="CHEBI:57453"/>
        <dbReference type="EC" id="2.1.2.1"/>
    </reaction>
</comment>
<comment type="cofactor">
    <cofactor evidence="1">
        <name>pyridoxal 5'-phosphate</name>
        <dbReference type="ChEBI" id="CHEBI:597326"/>
    </cofactor>
</comment>
<comment type="pathway">
    <text evidence="1">One-carbon metabolism; tetrahydrofolate interconversion.</text>
</comment>
<comment type="pathway">
    <text evidence="1">Amino-acid biosynthesis; glycine biosynthesis; glycine from L-serine: step 1/1.</text>
</comment>
<comment type="subunit">
    <text evidence="1">Homodimer.</text>
</comment>
<comment type="subcellular location">
    <subcellularLocation>
        <location evidence="1">Cytoplasm</location>
    </subcellularLocation>
</comment>
<comment type="similarity">
    <text evidence="1">Belongs to the SHMT family.</text>
</comment>
<name>GLYA_IDILO</name>
<feature type="chain" id="PRO_0000113589" description="Serine hydroxymethyltransferase">
    <location>
        <begin position="1"/>
        <end position="418"/>
    </location>
</feature>
<feature type="binding site" evidence="1">
    <location>
        <position position="121"/>
    </location>
    <ligand>
        <name>(6S)-5,6,7,8-tetrahydrofolate</name>
        <dbReference type="ChEBI" id="CHEBI:57453"/>
    </ligand>
</feature>
<feature type="binding site" evidence="1">
    <location>
        <begin position="125"/>
        <end position="127"/>
    </location>
    <ligand>
        <name>(6S)-5,6,7,8-tetrahydrofolate</name>
        <dbReference type="ChEBI" id="CHEBI:57453"/>
    </ligand>
</feature>
<feature type="binding site" evidence="1">
    <location>
        <begin position="356"/>
        <end position="358"/>
    </location>
    <ligand>
        <name>(6S)-5,6,7,8-tetrahydrofolate</name>
        <dbReference type="ChEBI" id="CHEBI:57453"/>
    </ligand>
</feature>
<feature type="site" description="Plays an important role in substrate specificity" evidence="1">
    <location>
        <position position="229"/>
    </location>
</feature>
<feature type="modified residue" description="N6-(pyridoxal phosphate)lysine" evidence="1">
    <location>
        <position position="230"/>
    </location>
</feature>
<protein>
    <recommendedName>
        <fullName evidence="1">Serine hydroxymethyltransferase</fullName>
        <shortName evidence="1">SHMT</shortName>
        <shortName evidence="1">Serine methylase</shortName>
        <ecNumber evidence="1">2.1.2.1</ecNumber>
    </recommendedName>
</protein>
<reference key="1">
    <citation type="journal article" date="2004" name="Proc. Natl. Acad. Sci. U.S.A.">
        <title>Genome sequence of the deep-sea gamma-proteobacterium Idiomarina loihiensis reveals amino acid fermentation as a source of carbon and energy.</title>
        <authorList>
            <person name="Hou S."/>
            <person name="Saw J.H."/>
            <person name="Lee K.S."/>
            <person name="Freitas T.A."/>
            <person name="Belisle C."/>
            <person name="Kawarabayasi Y."/>
            <person name="Donachie S.P."/>
            <person name="Pikina A."/>
            <person name="Galperin M.Y."/>
            <person name="Koonin E.V."/>
            <person name="Makarova K.S."/>
            <person name="Omelchenko M.V."/>
            <person name="Sorokin A."/>
            <person name="Wolf Y.I."/>
            <person name="Li Q.X."/>
            <person name="Keum Y.S."/>
            <person name="Campbell S."/>
            <person name="Denery J."/>
            <person name="Aizawa S."/>
            <person name="Shibata S."/>
            <person name="Malahoff A."/>
            <person name="Alam M."/>
        </authorList>
    </citation>
    <scope>NUCLEOTIDE SEQUENCE [LARGE SCALE GENOMIC DNA]</scope>
    <source>
        <strain>ATCC BAA-735 / DSM 15497 / L2-TR</strain>
    </source>
</reference>
<gene>
    <name evidence="1" type="primary">glyA</name>
    <name type="ordered locus">IL1872</name>
</gene>
<organism>
    <name type="scientific">Idiomarina loihiensis (strain ATCC BAA-735 / DSM 15497 / L2-TR)</name>
    <dbReference type="NCBI Taxonomy" id="283942"/>
    <lineage>
        <taxon>Bacteria</taxon>
        <taxon>Pseudomonadati</taxon>
        <taxon>Pseudomonadota</taxon>
        <taxon>Gammaproteobacteria</taxon>
        <taxon>Alteromonadales</taxon>
        <taxon>Idiomarinaceae</taxon>
        <taxon>Idiomarina</taxon>
    </lineage>
</organism>
<proteinExistence type="inferred from homology"/>
<sequence length="418" mass="45536">MLKSEMNIADFDADLWQAMQDEVERQEQHIELIASENYTSPRVMQAQGSQLTNKYAEGYPHKRYYGGCEFVDKVEDLAIERAKELFGAKYANVQPHSGSQANTAAFMAMMEAGDTFLGMSLAHGGHLTHGSGVNFSGKLYNAVSYGLDESTGEIDYAEVEKLAQEHKPKVIVAGFSAYSGIVDWAKFREIADKVDAYLMVDMAHVAGLVAAGVYPNPVPYAHVVTTTTHKTLAGPRGGLIISGSDDEKLHKKLNSAVFPGNQGGPLCHVIAGKAVAFQEALQPEFKDYQKQVLVNANAMVKTMQARGYKIVSNGTQNHLFLVDLIDKDITGKDADAALGNAFITVNKNAVPNDPRSPFVTSGLRLGTPAITRRGFKEAEAEQVANWICDVLDDIADESKINQVREQVKALCAKFPVYG</sequence>
<accession>Q5QXT4</accession>
<keyword id="KW-0028">Amino-acid biosynthesis</keyword>
<keyword id="KW-0963">Cytoplasm</keyword>
<keyword id="KW-0554">One-carbon metabolism</keyword>
<keyword id="KW-0663">Pyridoxal phosphate</keyword>
<keyword id="KW-1185">Reference proteome</keyword>
<keyword id="KW-0808">Transferase</keyword>